<protein>
    <recommendedName>
        <fullName>Ubiquinol-cytochrome c reductase iron-sulfur subunit</fullName>
        <ecNumber>7.1.1.8</ecNumber>
    </recommendedName>
    <alternativeName>
        <fullName>Rieske iron-sulfur protein</fullName>
        <shortName>RISP</shortName>
    </alternativeName>
</protein>
<organism>
    <name type="scientific">Blastochloris viridis</name>
    <name type="common">Rhodopseudomonas viridis</name>
    <dbReference type="NCBI Taxonomy" id="1079"/>
    <lineage>
        <taxon>Bacteria</taxon>
        <taxon>Pseudomonadati</taxon>
        <taxon>Pseudomonadota</taxon>
        <taxon>Alphaproteobacteria</taxon>
        <taxon>Hyphomicrobiales</taxon>
        <taxon>Blastochloridaceae</taxon>
        <taxon>Blastochloris</taxon>
    </lineage>
</organism>
<reference key="1">
    <citation type="journal article" date="1989" name="Mol. Gen. Genet.">
        <title>Cloning and sequencing of the fbcF, B and C genes encoding the cytochrome b/c1 complex from Rhodopseudomonas viridis.</title>
        <authorList>
            <person name="Verbist J."/>
            <person name="Lang F."/>
            <person name="Gabellini N."/>
            <person name="Oesterhelt D."/>
        </authorList>
    </citation>
    <scope>NUCLEOTIDE SEQUENCE [GENOMIC DNA]</scope>
    <source>
        <strain>ATCC 19567 / DSM 133 / F</strain>
    </source>
</reference>
<comment type="function">
    <text>Component of the ubiquinol-cytochrome c reductase complex (complex III or cytochrome b-c1 complex), which is a respiratory chain that generates an electrochemical potential coupled to ATP synthesis.</text>
</comment>
<comment type="catalytic activity">
    <reaction>
        <text>a quinol + 2 Fe(III)-[cytochrome c](out) = a quinone + 2 Fe(II)-[cytochrome c](out) + 2 H(+)(out)</text>
        <dbReference type="Rhea" id="RHEA:11484"/>
        <dbReference type="Rhea" id="RHEA-COMP:10350"/>
        <dbReference type="Rhea" id="RHEA-COMP:14399"/>
        <dbReference type="ChEBI" id="CHEBI:15378"/>
        <dbReference type="ChEBI" id="CHEBI:24646"/>
        <dbReference type="ChEBI" id="CHEBI:29033"/>
        <dbReference type="ChEBI" id="CHEBI:29034"/>
        <dbReference type="ChEBI" id="CHEBI:132124"/>
        <dbReference type="EC" id="7.1.1.8"/>
    </reaction>
</comment>
<comment type="cofactor">
    <cofactor evidence="2">
        <name>[2Fe-2S] cluster</name>
        <dbReference type="ChEBI" id="CHEBI:190135"/>
    </cofactor>
    <text evidence="2">Binds 1 [2Fe-2S] cluster per subunit.</text>
</comment>
<comment type="subunit">
    <text>The main subunits of complex b-c1 are: cytochrome b, cytochrome c1 and the Rieske protein.</text>
</comment>
<comment type="subcellular location">
    <subcellularLocation>
        <location>Cell membrane</location>
        <topology>Single-pass membrane protein</topology>
    </subcellularLocation>
</comment>
<comment type="miscellaneous">
    <text>The Rieske protein is a high potential 2Fe-2S protein.</text>
</comment>
<comment type="similarity">
    <text evidence="3">Belongs to the Rieske iron-sulfur protein family.</text>
</comment>
<gene>
    <name type="primary">petA</name>
    <name type="synonym">fbcF</name>
</gene>
<sequence length="179" mass="19011">MASSDTAEATRRDFLYVATAAVGAAGVAAVAWPFITQMNPDAATIAAGAPIDIDISPVTEGQIVRVFWRGKPIFIRHRTAKEIQSEEAADVGALIDPQPDSARVKPGKAEWLVVYASCTHLGCIPLGHQGDWGGWFCPCHGSQYDASGRVRKGPAPTNLPVPPYEFVDNTKIRIGAGVA</sequence>
<name>UCRI_BLAVI</name>
<dbReference type="EC" id="7.1.1.8"/>
<dbReference type="PIR" id="JQ0345">
    <property type="entry name" value="JQ0345"/>
</dbReference>
<dbReference type="RefSeq" id="WP_236823603.1">
    <property type="nucleotide sequence ID" value="NZ_AP014854.2"/>
</dbReference>
<dbReference type="SMR" id="P81380"/>
<dbReference type="STRING" id="1079.BVIR_2485"/>
<dbReference type="GO" id="GO:0005886">
    <property type="term" value="C:plasma membrane"/>
    <property type="evidence" value="ECO:0007669"/>
    <property type="project" value="UniProtKB-SubCell"/>
</dbReference>
<dbReference type="GO" id="GO:0051537">
    <property type="term" value="F:2 iron, 2 sulfur cluster binding"/>
    <property type="evidence" value="ECO:0007669"/>
    <property type="project" value="UniProtKB-KW"/>
</dbReference>
<dbReference type="GO" id="GO:0046872">
    <property type="term" value="F:metal ion binding"/>
    <property type="evidence" value="ECO:0007669"/>
    <property type="project" value="UniProtKB-KW"/>
</dbReference>
<dbReference type="GO" id="GO:0008121">
    <property type="term" value="F:ubiquinol-cytochrome-c reductase activity"/>
    <property type="evidence" value="ECO:0007669"/>
    <property type="project" value="UniProtKB-EC"/>
</dbReference>
<dbReference type="CDD" id="cd03470">
    <property type="entry name" value="Rieske_cytochrome_bc1"/>
    <property type="match status" value="1"/>
</dbReference>
<dbReference type="FunFam" id="2.102.10.10:FF:000001">
    <property type="entry name" value="Cytochrome b-c1 complex subunit Rieske, mitochondrial"/>
    <property type="match status" value="1"/>
</dbReference>
<dbReference type="Gene3D" id="2.102.10.10">
    <property type="entry name" value="Rieske [2Fe-2S] iron-sulphur domain"/>
    <property type="match status" value="1"/>
</dbReference>
<dbReference type="Gene3D" id="1.20.5.510">
    <property type="entry name" value="Single helix bin"/>
    <property type="match status" value="1"/>
</dbReference>
<dbReference type="InterPro" id="IPR017941">
    <property type="entry name" value="Rieske_2Fe-2S"/>
</dbReference>
<dbReference type="InterPro" id="IPR036922">
    <property type="entry name" value="Rieske_2Fe-2S_sf"/>
</dbReference>
<dbReference type="InterPro" id="IPR014349">
    <property type="entry name" value="Rieske_Fe-S_prot"/>
</dbReference>
<dbReference type="InterPro" id="IPR005805">
    <property type="entry name" value="Rieske_Fe-S_prot_C"/>
</dbReference>
<dbReference type="InterPro" id="IPR006311">
    <property type="entry name" value="TAT_signal"/>
</dbReference>
<dbReference type="InterPro" id="IPR019546">
    <property type="entry name" value="TAT_signal_bac_arc"/>
</dbReference>
<dbReference type="InterPro" id="IPR019470">
    <property type="entry name" value="Ubiq_cytC_Rdtase_Fe-S_su_TAT"/>
</dbReference>
<dbReference type="InterPro" id="IPR006317">
    <property type="entry name" value="Ubiquinol_cyt_c_Rdtase_Fe-S-su"/>
</dbReference>
<dbReference type="NCBIfam" id="TIGR01416">
    <property type="entry name" value="Rieske_proteo"/>
    <property type="match status" value="1"/>
</dbReference>
<dbReference type="NCBIfam" id="TIGR01409">
    <property type="entry name" value="TAT_signal_seq"/>
    <property type="match status" value="1"/>
</dbReference>
<dbReference type="PANTHER" id="PTHR10134">
    <property type="entry name" value="CYTOCHROME B-C1 COMPLEX SUBUNIT RIESKE, MITOCHONDRIAL"/>
    <property type="match status" value="1"/>
</dbReference>
<dbReference type="Pfam" id="PF00355">
    <property type="entry name" value="Rieske"/>
    <property type="match status" value="1"/>
</dbReference>
<dbReference type="Pfam" id="PF10399">
    <property type="entry name" value="UCR_Fe-S_N"/>
    <property type="match status" value="1"/>
</dbReference>
<dbReference type="PRINTS" id="PR00162">
    <property type="entry name" value="RIESKE"/>
</dbReference>
<dbReference type="SUPFAM" id="SSF50022">
    <property type="entry name" value="ISP domain"/>
    <property type="match status" value="1"/>
</dbReference>
<dbReference type="PROSITE" id="PS51296">
    <property type="entry name" value="RIESKE"/>
    <property type="match status" value="1"/>
</dbReference>
<dbReference type="PROSITE" id="PS51318">
    <property type="entry name" value="TAT"/>
    <property type="match status" value="1"/>
</dbReference>
<evidence type="ECO:0000255" key="1"/>
<evidence type="ECO:0000255" key="2">
    <source>
        <dbReference type="PROSITE-ProRule" id="PRU00628"/>
    </source>
</evidence>
<evidence type="ECO:0000305" key="3"/>
<keyword id="KW-0001">2Fe-2S</keyword>
<keyword id="KW-1003">Cell membrane</keyword>
<keyword id="KW-1015">Disulfide bond</keyword>
<keyword id="KW-0249">Electron transport</keyword>
<keyword id="KW-0408">Iron</keyword>
<keyword id="KW-0411">Iron-sulfur</keyword>
<keyword id="KW-0472">Membrane</keyword>
<keyword id="KW-0479">Metal-binding</keyword>
<keyword id="KW-1278">Translocase</keyword>
<keyword id="KW-0812">Transmembrane</keyword>
<keyword id="KW-1133">Transmembrane helix</keyword>
<keyword id="KW-0813">Transport</keyword>
<proteinExistence type="inferred from homology"/>
<feature type="chain" id="PRO_0000127765" description="Ubiquinol-cytochrome c reductase iron-sulfur subunit">
    <location>
        <begin position="1"/>
        <end position="179"/>
    </location>
</feature>
<feature type="transmembrane region" description="Helical" evidence="1">
    <location>
        <begin position="14"/>
        <end position="35"/>
    </location>
</feature>
<feature type="domain" description="Rieske" evidence="2">
    <location>
        <begin position="80"/>
        <end position="173"/>
    </location>
</feature>
<feature type="binding site" evidence="2">
    <location>
        <position position="118"/>
    </location>
    <ligand>
        <name>[2Fe-2S] cluster</name>
        <dbReference type="ChEBI" id="CHEBI:190135"/>
    </ligand>
</feature>
<feature type="binding site" evidence="2">
    <location>
        <position position="120"/>
    </location>
    <ligand>
        <name>[2Fe-2S] cluster</name>
        <dbReference type="ChEBI" id="CHEBI:190135"/>
    </ligand>
</feature>
<feature type="binding site" evidence="2">
    <location>
        <position position="137"/>
    </location>
    <ligand>
        <name>[2Fe-2S] cluster</name>
        <dbReference type="ChEBI" id="CHEBI:190135"/>
    </ligand>
</feature>
<feature type="binding site" evidence="2">
    <location>
        <position position="140"/>
    </location>
    <ligand>
        <name>[2Fe-2S] cluster</name>
        <dbReference type="ChEBI" id="CHEBI:190135"/>
    </ligand>
</feature>
<feature type="disulfide bond" evidence="2">
    <location>
        <begin position="123"/>
        <end position="139"/>
    </location>
</feature>
<accession>P81380</accession>